<accession>Q6H874</accession>
<accession>B7EQR1</accession>
<comment type="catalytic activity">
    <reaction>
        <text>ATP + H2O = ADP + phosphate + H(+)</text>
        <dbReference type="Rhea" id="RHEA:13065"/>
        <dbReference type="ChEBI" id="CHEBI:15377"/>
        <dbReference type="ChEBI" id="CHEBI:15378"/>
        <dbReference type="ChEBI" id="CHEBI:30616"/>
        <dbReference type="ChEBI" id="CHEBI:43474"/>
        <dbReference type="ChEBI" id="CHEBI:456216"/>
        <dbReference type="EC" id="3.6.4.13"/>
    </reaction>
</comment>
<comment type="domain">
    <text>The Q motif is unique to and characteristic of the DEAD box family of RNA helicases and controls ATP binding and hydrolysis.</text>
</comment>
<comment type="similarity">
    <text evidence="3">Belongs to the DEAD box helicase family.</text>
</comment>
<proteinExistence type="evidence at transcript level"/>
<evidence type="ECO:0000255" key="1">
    <source>
        <dbReference type="PROSITE-ProRule" id="PRU00541"/>
    </source>
</evidence>
<evidence type="ECO:0000255" key="2">
    <source>
        <dbReference type="PROSITE-ProRule" id="PRU00542"/>
    </source>
</evidence>
<evidence type="ECO:0000305" key="3"/>
<evidence type="ECO:0000312" key="4">
    <source>
        <dbReference type="EMBL" id="EEE57441.1"/>
    </source>
</evidence>
<keyword id="KW-0067">ATP-binding</keyword>
<keyword id="KW-0347">Helicase</keyword>
<keyword id="KW-0378">Hydrolase</keyword>
<keyword id="KW-0547">Nucleotide-binding</keyword>
<keyword id="KW-1185">Reference proteome</keyword>
<keyword id="KW-0694">RNA-binding</keyword>
<protein>
    <recommendedName>
        <fullName>DEAD-box ATP-dependent RNA helicase 47A</fullName>
        <ecNumber>3.6.4.13</ecNumber>
    </recommendedName>
</protein>
<gene>
    <name type="ordered locus">Os02g0636300</name>
    <name type="ordered locus">LOC_Os02g42406</name>
    <name type="ORF">OJ1581_H9.6</name>
    <name evidence="4" type="ORF">OsJ_07650</name>
</gene>
<name>RH47A_ORYSJ</name>
<organism>
    <name type="scientific">Oryza sativa subsp. japonica</name>
    <name type="common">Rice</name>
    <dbReference type="NCBI Taxonomy" id="39947"/>
    <lineage>
        <taxon>Eukaryota</taxon>
        <taxon>Viridiplantae</taxon>
        <taxon>Streptophyta</taxon>
        <taxon>Embryophyta</taxon>
        <taxon>Tracheophyta</taxon>
        <taxon>Spermatophyta</taxon>
        <taxon>Magnoliopsida</taxon>
        <taxon>Liliopsida</taxon>
        <taxon>Poales</taxon>
        <taxon>Poaceae</taxon>
        <taxon>BOP clade</taxon>
        <taxon>Oryzoideae</taxon>
        <taxon>Oryzeae</taxon>
        <taxon>Oryzinae</taxon>
        <taxon>Oryza</taxon>
        <taxon>Oryza sativa</taxon>
    </lineage>
</organism>
<sequence length="573" mass="63285">MRLTVGQVHRHVLALASSRSCFVLGDHLPFRMLSLPRVVRFHQTAWHDIQTVEDKSGPLTLASLEVQNKVEYVKKERATRTGGIKPSSRASALNMKPKVSSFNAKPVKSALPKSAVLKKTLKIDESLFSAKSFEELGLPPLLIDRLNKEGLTAPTEVQSAAIPIISQKHDAVIQSYTGSGKTLAYLLPILSEIGPLKRPTEQDSSDKRSGVEAVIVAPSRELGMQIVREVEKILGPNDKRLVQQLVGGANRSRQEEALKKNKPIIVVGTPGRISEISAAGKLHTHSCRFLVLDEVDQLLSFNYREDMHRILEHVGRKSGTSSRDILGPLARRSERQTILVSATIPFSVIRAARSWGHDPVLVRAMSVVPLESITVPRPVLSQPDANSNSPSNSVNQAAVDSLPPSLEHYYCTSKAQHKVDTLRRCIHALEAQTVIAFMNNTKPLKDVVFKLEARGMKATELHGDLGKLARSTVLKKFKDGEFRVLVTNELSARGLDVPECDLVINLDLPTDSTHYAHRAGRTGRLGRKGTVVTICEETETFVVRKMRKQLAVPIKPCEFTEGKLLVHKEEDVE</sequence>
<feature type="chain" id="PRO_0000282516" description="DEAD-box ATP-dependent RNA helicase 47A">
    <location>
        <begin position="1"/>
        <end position="573"/>
    </location>
</feature>
<feature type="domain" description="Helicase ATP-binding" evidence="1">
    <location>
        <begin position="162"/>
        <end position="362"/>
    </location>
</feature>
<feature type="domain" description="Helicase C-terminal" evidence="2">
    <location>
        <begin position="421"/>
        <end position="565"/>
    </location>
</feature>
<feature type="short sequence motif" description="Q motif">
    <location>
        <begin position="131"/>
        <end position="159"/>
    </location>
</feature>
<feature type="short sequence motif" description="DEAD box">
    <location>
        <begin position="293"/>
        <end position="296"/>
    </location>
</feature>
<feature type="binding site" evidence="1">
    <location>
        <begin position="175"/>
        <end position="182"/>
    </location>
    <ligand>
        <name>ATP</name>
        <dbReference type="ChEBI" id="CHEBI:30616"/>
    </ligand>
</feature>
<dbReference type="EC" id="3.6.4.13"/>
<dbReference type="EMBL" id="AP004067">
    <property type="protein sequence ID" value="BAD25075.1"/>
    <property type="molecule type" value="Genomic_DNA"/>
</dbReference>
<dbReference type="EMBL" id="AP008208">
    <property type="protein sequence ID" value="BAF09436.1"/>
    <property type="molecule type" value="Genomic_DNA"/>
</dbReference>
<dbReference type="EMBL" id="AP014958">
    <property type="protein sequence ID" value="BAS79942.1"/>
    <property type="molecule type" value="Genomic_DNA"/>
</dbReference>
<dbReference type="EMBL" id="CM000139">
    <property type="protein sequence ID" value="EEE57441.1"/>
    <property type="molecule type" value="Genomic_DNA"/>
</dbReference>
<dbReference type="EMBL" id="AK100670">
    <property type="protein sequence ID" value="BAG94708.1"/>
    <property type="molecule type" value="mRNA"/>
</dbReference>
<dbReference type="RefSeq" id="XP_015622725.1">
    <property type="nucleotide sequence ID" value="XM_015767239.1"/>
</dbReference>
<dbReference type="RefSeq" id="XP_015622726.1">
    <property type="nucleotide sequence ID" value="XM_015767240.1"/>
</dbReference>
<dbReference type="SMR" id="Q6H874"/>
<dbReference type="BioGRID" id="799120">
    <property type="interactions" value="1"/>
</dbReference>
<dbReference type="FunCoup" id="Q6H874">
    <property type="interactions" value="1447"/>
</dbReference>
<dbReference type="STRING" id="39947.Q6H874"/>
<dbReference type="PaxDb" id="39947-Q6H874"/>
<dbReference type="EnsemblPlants" id="Os02t0636300-01">
    <property type="protein sequence ID" value="Os02t0636300-01"/>
    <property type="gene ID" value="Os02g0636300"/>
</dbReference>
<dbReference type="Gramene" id="Os02t0636300-01">
    <property type="protein sequence ID" value="Os02t0636300-01"/>
    <property type="gene ID" value="Os02g0636300"/>
</dbReference>
<dbReference type="KEGG" id="dosa:Os02g0636300"/>
<dbReference type="eggNOG" id="KOG0327">
    <property type="taxonomic scope" value="Eukaryota"/>
</dbReference>
<dbReference type="HOGENOM" id="CLU_003041_1_3_1"/>
<dbReference type="InParanoid" id="Q6H874"/>
<dbReference type="OMA" id="NDPPHIA"/>
<dbReference type="OrthoDB" id="10256233at2759"/>
<dbReference type="Proteomes" id="UP000000763">
    <property type="component" value="Chromosome 2"/>
</dbReference>
<dbReference type="Proteomes" id="UP000007752">
    <property type="component" value="Chromosome 2"/>
</dbReference>
<dbReference type="Proteomes" id="UP000059680">
    <property type="component" value="Chromosome 2"/>
</dbReference>
<dbReference type="GO" id="GO:0005524">
    <property type="term" value="F:ATP binding"/>
    <property type="evidence" value="ECO:0007669"/>
    <property type="project" value="UniProtKB-KW"/>
</dbReference>
<dbReference type="GO" id="GO:0016887">
    <property type="term" value="F:ATP hydrolysis activity"/>
    <property type="evidence" value="ECO:0007669"/>
    <property type="project" value="RHEA"/>
</dbReference>
<dbReference type="GO" id="GO:0003723">
    <property type="term" value="F:RNA binding"/>
    <property type="evidence" value="ECO:0000318"/>
    <property type="project" value="GO_Central"/>
</dbReference>
<dbReference type="GO" id="GO:0003724">
    <property type="term" value="F:RNA helicase activity"/>
    <property type="evidence" value="ECO:0000318"/>
    <property type="project" value="GO_Central"/>
</dbReference>
<dbReference type="CDD" id="cd00268">
    <property type="entry name" value="DEADc"/>
    <property type="match status" value="1"/>
</dbReference>
<dbReference type="CDD" id="cd18787">
    <property type="entry name" value="SF2_C_DEAD"/>
    <property type="match status" value="1"/>
</dbReference>
<dbReference type="Gene3D" id="3.40.50.300">
    <property type="entry name" value="P-loop containing nucleotide triphosphate hydrolases"/>
    <property type="match status" value="2"/>
</dbReference>
<dbReference type="InterPro" id="IPR011545">
    <property type="entry name" value="DEAD/DEAH_box_helicase_dom"/>
</dbReference>
<dbReference type="InterPro" id="IPR050547">
    <property type="entry name" value="DEAD_box_RNA_helicases"/>
</dbReference>
<dbReference type="InterPro" id="IPR014001">
    <property type="entry name" value="Helicase_ATP-bd"/>
</dbReference>
<dbReference type="InterPro" id="IPR001650">
    <property type="entry name" value="Helicase_C-like"/>
</dbReference>
<dbReference type="InterPro" id="IPR027417">
    <property type="entry name" value="P-loop_NTPase"/>
</dbReference>
<dbReference type="InterPro" id="IPR014014">
    <property type="entry name" value="RNA_helicase_DEAD_Q_motif"/>
</dbReference>
<dbReference type="PANTHER" id="PTHR47963">
    <property type="entry name" value="DEAD-BOX ATP-DEPENDENT RNA HELICASE 47, MITOCHONDRIAL"/>
    <property type="match status" value="1"/>
</dbReference>
<dbReference type="PANTHER" id="PTHR47963:SF3">
    <property type="entry name" value="DEAD-BOX ATP-DEPENDENT RNA HELICASE 47, MITOCHONDRIAL"/>
    <property type="match status" value="1"/>
</dbReference>
<dbReference type="Pfam" id="PF00270">
    <property type="entry name" value="DEAD"/>
    <property type="match status" value="1"/>
</dbReference>
<dbReference type="Pfam" id="PF00271">
    <property type="entry name" value="Helicase_C"/>
    <property type="match status" value="1"/>
</dbReference>
<dbReference type="SMART" id="SM00487">
    <property type="entry name" value="DEXDc"/>
    <property type="match status" value="1"/>
</dbReference>
<dbReference type="SMART" id="SM00490">
    <property type="entry name" value="HELICc"/>
    <property type="match status" value="1"/>
</dbReference>
<dbReference type="SUPFAM" id="SSF52540">
    <property type="entry name" value="P-loop containing nucleoside triphosphate hydrolases"/>
    <property type="match status" value="1"/>
</dbReference>
<dbReference type="PROSITE" id="PS51192">
    <property type="entry name" value="HELICASE_ATP_BIND_1"/>
    <property type="match status" value="1"/>
</dbReference>
<dbReference type="PROSITE" id="PS51194">
    <property type="entry name" value="HELICASE_CTER"/>
    <property type="match status" value="1"/>
</dbReference>
<dbReference type="PROSITE" id="PS51195">
    <property type="entry name" value="Q_MOTIF"/>
    <property type="match status" value="1"/>
</dbReference>
<reference key="1">
    <citation type="journal article" date="2005" name="Nature">
        <title>The map-based sequence of the rice genome.</title>
        <authorList>
            <consortium name="International rice genome sequencing project (IRGSP)"/>
        </authorList>
    </citation>
    <scope>NUCLEOTIDE SEQUENCE [LARGE SCALE GENOMIC DNA]</scope>
    <source>
        <strain>cv. Nipponbare</strain>
    </source>
</reference>
<reference key="2">
    <citation type="journal article" date="2008" name="Nucleic Acids Res.">
        <title>The rice annotation project database (RAP-DB): 2008 update.</title>
        <authorList>
            <consortium name="The rice annotation project (RAP)"/>
        </authorList>
    </citation>
    <scope>GENOME REANNOTATION</scope>
    <source>
        <strain>cv. Nipponbare</strain>
    </source>
</reference>
<reference key="3">
    <citation type="journal article" date="2013" name="Rice">
        <title>Improvement of the Oryza sativa Nipponbare reference genome using next generation sequence and optical map data.</title>
        <authorList>
            <person name="Kawahara Y."/>
            <person name="de la Bastide M."/>
            <person name="Hamilton J.P."/>
            <person name="Kanamori H."/>
            <person name="McCombie W.R."/>
            <person name="Ouyang S."/>
            <person name="Schwartz D.C."/>
            <person name="Tanaka T."/>
            <person name="Wu J."/>
            <person name="Zhou S."/>
            <person name="Childs K.L."/>
            <person name="Davidson R.M."/>
            <person name="Lin H."/>
            <person name="Quesada-Ocampo L."/>
            <person name="Vaillancourt B."/>
            <person name="Sakai H."/>
            <person name="Lee S.S."/>
            <person name="Kim J."/>
            <person name="Numa H."/>
            <person name="Itoh T."/>
            <person name="Buell C.R."/>
            <person name="Matsumoto T."/>
        </authorList>
    </citation>
    <scope>GENOME REANNOTATION</scope>
    <source>
        <strain>cv. Nipponbare</strain>
    </source>
</reference>
<reference key="4">
    <citation type="journal article" date="2005" name="PLoS Biol.">
        <title>The genomes of Oryza sativa: a history of duplications.</title>
        <authorList>
            <person name="Yu J."/>
            <person name="Wang J."/>
            <person name="Lin W."/>
            <person name="Li S."/>
            <person name="Li H."/>
            <person name="Zhou J."/>
            <person name="Ni P."/>
            <person name="Dong W."/>
            <person name="Hu S."/>
            <person name="Zeng C."/>
            <person name="Zhang J."/>
            <person name="Zhang Y."/>
            <person name="Li R."/>
            <person name="Xu Z."/>
            <person name="Li S."/>
            <person name="Li X."/>
            <person name="Zheng H."/>
            <person name="Cong L."/>
            <person name="Lin L."/>
            <person name="Yin J."/>
            <person name="Geng J."/>
            <person name="Li G."/>
            <person name="Shi J."/>
            <person name="Liu J."/>
            <person name="Lv H."/>
            <person name="Li J."/>
            <person name="Wang J."/>
            <person name="Deng Y."/>
            <person name="Ran L."/>
            <person name="Shi X."/>
            <person name="Wang X."/>
            <person name="Wu Q."/>
            <person name="Li C."/>
            <person name="Ren X."/>
            <person name="Wang J."/>
            <person name="Wang X."/>
            <person name="Li D."/>
            <person name="Liu D."/>
            <person name="Zhang X."/>
            <person name="Ji Z."/>
            <person name="Zhao W."/>
            <person name="Sun Y."/>
            <person name="Zhang Z."/>
            <person name="Bao J."/>
            <person name="Han Y."/>
            <person name="Dong L."/>
            <person name="Ji J."/>
            <person name="Chen P."/>
            <person name="Wu S."/>
            <person name="Liu J."/>
            <person name="Xiao Y."/>
            <person name="Bu D."/>
            <person name="Tan J."/>
            <person name="Yang L."/>
            <person name="Ye C."/>
            <person name="Zhang J."/>
            <person name="Xu J."/>
            <person name="Zhou Y."/>
            <person name="Yu Y."/>
            <person name="Zhang B."/>
            <person name="Zhuang S."/>
            <person name="Wei H."/>
            <person name="Liu B."/>
            <person name="Lei M."/>
            <person name="Yu H."/>
            <person name="Li Y."/>
            <person name="Xu H."/>
            <person name="Wei S."/>
            <person name="He X."/>
            <person name="Fang L."/>
            <person name="Zhang Z."/>
            <person name="Zhang Y."/>
            <person name="Huang X."/>
            <person name="Su Z."/>
            <person name="Tong W."/>
            <person name="Li J."/>
            <person name="Tong Z."/>
            <person name="Li S."/>
            <person name="Ye J."/>
            <person name="Wang L."/>
            <person name="Fang L."/>
            <person name="Lei T."/>
            <person name="Chen C.-S."/>
            <person name="Chen H.-C."/>
            <person name="Xu Z."/>
            <person name="Li H."/>
            <person name="Huang H."/>
            <person name="Zhang F."/>
            <person name="Xu H."/>
            <person name="Li N."/>
            <person name="Zhao C."/>
            <person name="Li S."/>
            <person name="Dong L."/>
            <person name="Huang Y."/>
            <person name="Li L."/>
            <person name="Xi Y."/>
            <person name="Qi Q."/>
            <person name="Li W."/>
            <person name="Zhang B."/>
            <person name="Hu W."/>
            <person name="Zhang Y."/>
            <person name="Tian X."/>
            <person name="Jiao Y."/>
            <person name="Liang X."/>
            <person name="Jin J."/>
            <person name="Gao L."/>
            <person name="Zheng W."/>
            <person name="Hao B."/>
            <person name="Liu S.-M."/>
            <person name="Wang W."/>
            <person name="Yuan L."/>
            <person name="Cao M."/>
            <person name="McDermott J."/>
            <person name="Samudrala R."/>
            <person name="Wang J."/>
            <person name="Wong G.K.-S."/>
            <person name="Yang H."/>
        </authorList>
    </citation>
    <scope>NUCLEOTIDE SEQUENCE [LARGE SCALE GENOMIC DNA]</scope>
    <source>
        <strain>cv. Nipponbare</strain>
    </source>
</reference>
<reference key="5">
    <citation type="journal article" date="2003" name="Science">
        <title>Collection, mapping, and annotation of over 28,000 cDNA clones from japonica rice.</title>
        <authorList>
            <consortium name="The rice full-length cDNA consortium"/>
        </authorList>
    </citation>
    <scope>NUCLEOTIDE SEQUENCE [LARGE SCALE MRNA]</scope>
    <source>
        <strain>cv. Nipponbare</strain>
    </source>
</reference>